<evidence type="ECO:0000255" key="1">
    <source>
        <dbReference type="HAMAP-Rule" id="MF_00265"/>
    </source>
</evidence>
<comment type="function">
    <text evidence="1">Toxic component of a type II toxin-antitoxin (TA) system. An RNase. Its toxic effect is neutralized by coexpression with cognate antitoxin VapB21 (By similarity).</text>
</comment>
<comment type="cofactor">
    <cofactor evidence="1">
        <name>Mg(2+)</name>
        <dbReference type="ChEBI" id="CHEBI:18420"/>
    </cofactor>
</comment>
<comment type="similarity">
    <text evidence="1">Belongs to the PINc/VapC protein family.</text>
</comment>
<reference key="1">
    <citation type="journal article" date="2002" name="J. Bacteriol.">
        <title>Whole-genome comparison of Mycobacterium tuberculosis clinical and laboratory strains.</title>
        <authorList>
            <person name="Fleischmann R.D."/>
            <person name="Alland D."/>
            <person name="Eisen J.A."/>
            <person name="Carpenter L."/>
            <person name="White O."/>
            <person name="Peterson J.D."/>
            <person name="DeBoy R.T."/>
            <person name="Dodson R.J."/>
            <person name="Gwinn M.L."/>
            <person name="Haft D.H."/>
            <person name="Hickey E.K."/>
            <person name="Kolonay J.F."/>
            <person name="Nelson W.C."/>
            <person name="Umayam L.A."/>
            <person name="Ermolaeva M.D."/>
            <person name="Salzberg S.L."/>
            <person name="Delcher A."/>
            <person name="Utterback T.R."/>
            <person name="Weidman J.F."/>
            <person name="Khouri H.M."/>
            <person name="Gill J."/>
            <person name="Mikula A."/>
            <person name="Bishai W."/>
            <person name="Jacobs W.R. Jr."/>
            <person name="Venter J.C."/>
            <person name="Fraser C.M."/>
        </authorList>
    </citation>
    <scope>NUCLEOTIDE SEQUENCE [LARGE SCALE GENOMIC DNA]</scope>
    <source>
        <strain>CDC 1551 / Oshkosh</strain>
    </source>
</reference>
<dbReference type="EC" id="3.1.-.-" evidence="1"/>
<dbReference type="EMBL" id="AE000516">
    <property type="protein sequence ID" value="AAK47146.1"/>
    <property type="molecule type" value="Genomic_DNA"/>
</dbReference>
<dbReference type="PIR" id="D70880">
    <property type="entry name" value="D70880"/>
</dbReference>
<dbReference type="RefSeq" id="WP_003414059.1">
    <property type="nucleotide sequence ID" value="NZ_KK341227.1"/>
</dbReference>
<dbReference type="SMR" id="P9WF90"/>
<dbReference type="KEGG" id="mtc:MT2827"/>
<dbReference type="PATRIC" id="fig|83331.31.peg.3048"/>
<dbReference type="HOGENOM" id="CLU_118482_4_0_11"/>
<dbReference type="Proteomes" id="UP000001020">
    <property type="component" value="Chromosome"/>
</dbReference>
<dbReference type="GO" id="GO:0000287">
    <property type="term" value="F:magnesium ion binding"/>
    <property type="evidence" value="ECO:0007669"/>
    <property type="project" value="UniProtKB-UniRule"/>
</dbReference>
<dbReference type="GO" id="GO:0004540">
    <property type="term" value="F:RNA nuclease activity"/>
    <property type="evidence" value="ECO:0007669"/>
    <property type="project" value="InterPro"/>
</dbReference>
<dbReference type="CDD" id="cd18755">
    <property type="entry name" value="PIN_MtVapC3_VapC21-like"/>
    <property type="match status" value="1"/>
</dbReference>
<dbReference type="FunFam" id="3.40.50.1010:FF:000068">
    <property type="entry name" value="Ribonuclease VapC"/>
    <property type="match status" value="1"/>
</dbReference>
<dbReference type="Gene3D" id="3.40.50.1010">
    <property type="entry name" value="5'-nuclease"/>
    <property type="match status" value="1"/>
</dbReference>
<dbReference type="HAMAP" id="MF_00265">
    <property type="entry name" value="VapC_Nob1"/>
    <property type="match status" value="1"/>
</dbReference>
<dbReference type="InterPro" id="IPR029060">
    <property type="entry name" value="PIN-like_dom_sf"/>
</dbReference>
<dbReference type="InterPro" id="IPR002716">
    <property type="entry name" value="PIN_dom"/>
</dbReference>
<dbReference type="InterPro" id="IPR050556">
    <property type="entry name" value="Type_II_TA_system_RNase"/>
</dbReference>
<dbReference type="InterPro" id="IPR022907">
    <property type="entry name" value="VapC_family"/>
</dbReference>
<dbReference type="PANTHER" id="PTHR33653">
    <property type="entry name" value="RIBONUCLEASE VAPC2"/>
    <property type="match status" value="1"/>
</dbReference>
<dbReference type="PANTHER" id="PTHR33653:SF1">
    <property type="entry name" value="RIBONUCLEASE VAPC2"/>
    <property type="match status" value="1"/>
</dbReference>
<dbReference type="Pfam" id="PF01850">
    <property type="entry name" value="PIN"/>
    <property type="match status" value="1"/>
</dbReference>
<dbReference type="SUPFAM" id="SSF88723">
    <property type="entry name" value="PIN domain-like"/>
    <property type="match status" value="1"/>
</dbReference>
<sequence length="138" mass="15773">MTTRYLLDKSAAYRAHLPAVRHRLEPLMERGLLARCGITDLEFGVSARSREDHRTLGTYRRDALEYVNTPDTVWVRAWEIQEALTDKGFHRSVKIPDLIIAAVAEHHGIPVMHYDQDFERIAAITRQPVEWVVAPGTA</sequence>
<protein>
    <recommendedName>
        <fullName evidence="1">Ribonuclease VapC21</fullName>
        <shortName evidence="1">RNase VapC21</shortName>
        <ecNumber evidence="1">3.1.-.-</ecNumber>
    </recommendedName>
    <alternativeName>
        <fullName evidence="1">Toxin VapC21</fullName>
    </alternativeName>
</protein>
<accession>P9WF90</accession>
<accession>L0TAS8</accession>
<accession>O33299</accession>
<accession>Q7D6M9</accession>
<organism>
    <name type="scientific">Mycobacterium tuberculosis (strain CDC 1551 / Oshkosh)</name>
    <dbReference type="NCBI Taxonomy" id="83331"/>
    <lineage>
        <taxon>Bacteria</taxon>
        <taxon>Bacillati</taxon>
        <taxon>Actinomycetota</taxon>
        <taxon>Actinomycetes</taxon>
        <taxon>Mycobacteriales</taxon>
        <taxon>Mycobacteriaceae</taxon>
        <taxon>Mycobacterium</taxon>
        <taxon>Mycobacterium tuberculosis complex</taxon>
    </lineage>
</organism>
<keyword id="KW-0378">Hydrolase</keyword>
<keyword id="KW-0460">Magnesium</keyword>
<keyword id="KW-0479">Metal-binding</keyword>
<keyword id="KW-0540">Nuclease</keyword>
<keyword id="KW-1185">Reference proteome</keyword>
<keyword id="KW-1277">Toxin-antitoxin system</keyword>
<gene>
    <name evidence="1" type="primary">vapC21</name>
    <name type="ordered locus">MT2827</name>
</gene>
<name>VPC21_MYCTO</name>
<feature type="chain" id="PRO_0000428580" description="Ribonuclease VapC21">
    <location>
        <begin position="1"/>
        <end position="138"/>
    </location>
</feature>
<feature type="domain" description="PINc" evidence="1">
    <location>
        <begin position="6"/>
        <end position="128"/>
    </location>
</feature>
<feature type="binding site" evidence="1">
    <location>
        <position position="8"/>
    </location>
    <ligand>
        <name>Mg(2+)</name>
        <dbReference type="ChEBI" id="CHEBI:18420"/>
    </ligand>
</feature>
<feature type="binding site" evidence="1">
    <location>
        <position position="97"/>
    </location>
    <ligand>
        <name>Mg(2+)</name>
        <dbReference type="ChEBI" id="CHEBI:18420"/>
    </ligand>
</feature>
<proteinExistence type="inferred from homology"/>